<accession>P43100</accession>
<sequence length="894" mass="99934">MAVKSQLGVTYTTKTFPPSPPRTVGNSHAGSDDERDEVDATPTTPPVEKLGQLLKPYSLPPTNTPTHVLPEDLKTPDHRVNRDPRLIRLTGVHPFNVEPPLTDLYDEGFLNSENLHYVRNHGPVPHCPDDESLNWTFTVDGLVEKPFTIAVRDLIQKYDQFTYPVTLVCAGNRRKEQNVVRKSKGFSWGAAGLSTALWTGVPIGALLRMAKPKRAAKYVCFEGADKLPNGYYGTSVKLNWCMDENRGIMVAHKMNGQSLHPDHGKPVRIIIPGQIGGRSVKWLKKITITSEPSDNWYHIYDNRVLPTTISPDASANLPDVWKDEKYAIYDLNANSAICYPRHDERLVLATAPDTYKVRGYAYGGGGKRITRLEVTLNKGKSWLLAGIHYPEDDYRRAPDGDLLYGGSTDMWWRETCFCWCFWEIDIPVADLSAADDIMIRAMDEGMMVQPRDMYWSVLGMMNNPWFRVVIHKEDGALRFEHPTQPALMPGGWMERVKRRGGNLTNGFWGEKTAAEEEQVLAEPEKEICMTNPKVVRIISLEELKAHEGEMEPWFVVNGHVYNGTPYLDNHPGGATSIINAAAQDATEEFMTIHSENAKAMMPQYHIGTLNDAARKALEGSAEESPASDPTRAVFLQPKYWSKAILETKTDVSSDSKIFSFRLDHAAQSIGLPTGQHLLVRLRDPATREAVIRAYTPLSETHAKGQLDILIKIYRDVPGQPGGKMTQALDSIPLGHFVDIKGPVGKFEYLGKGHCTVSGTSRHVRRFVMICAGSGVTPIFQVLRAVTSDAQDGTECLVLDGNRCEKDILCREELDAMVARAPARTTLLHKLSRPDASWCGLRGRMDKEYLEEHIGGFRKSDGREMVLVCGPAALEETVRSVLVEMAWKPEDMLFF</sequence>
<proteinExistence type="inferred from homology"/>
<comment type="function">
    <text>Nitrate reductase is a key enzyme involved in the first step of nitrate assimilation in plants, fungi and bacteria.</text>
</comment>
<comment type="catalytic activity">
    <reaction>
        <text>nitrite + NADP(+) + H2O = nitrate + NADPH + H(+)</text>
        <dbReference type="Rhea" id="RHEA:19061"/>
        <dbReference type="ChEBI" id="CHEBI:15377"/>
        <dbReference type="ChEBI" id="CHEBI:15378"/>
        <dbReference type="ChEBI" id="CHEBI:16301"/>
        <dbReference type="ChEBI" id="CHEBI:17632"/>
        <dbReference type="ChEBI" id="CHEBI:57783"/>
        <dbReference type="ChEBI" id="CHEBI:58349"/>
        <dbReference type="EC" id="1.7.1.3"/>
    </reaction>
</comment>
<comment type="cofactor">
    <cofactor evidence="1">
        <name>FAD</name>
        <dbReference type="ChEBI" id="CHEBI:57692"/>
    </cofactor>
    <text evidence="1">Binds 1 FAD.</text>
</comment>
<comment type="cofactor">
    <cofactor evidence="1">
        <name>heme</name>
        <dbReference type="ChEBI" id="CHEBI:30413"/>
    </cofactor>
    <text evidence="1">Binds 1 heme group. The heme group is called cytochrome b-557.</text>
</comment>
<comment type="cofactor">
    <cofactor evidence="1">
        <name>Mo-molybdopterin</name>
        <dbReference type="ChEBI" id="CHEBI:71302"/>
    </cofactor>
    <text evidence="1">Binds 1 Mo-molybdopterin (Mo-MPT) cofactor per subunit.</text>
</comment>
<comment type="subunit">
    <text evidence="1">Homodimer.</text>
</comment>
<comment type="similarity">
    <text evidence="9">Belongs to the nitrate reductase family.</text>
</comment>
<name>NIA_BEABA</name>
<protein>
    <recommendedName>
        <fullName>Nitrate reductase [NADPH]</fullName>
        <shortName>NR</shortName>
        <ecNumber>1.7.1.3</ecNumber>
    </recommendedName>
</protein>
<reference key="1">
    <citation type="submission" date="1995-02" db="EMBL/GenBank/DDBJ databases">
        <authorList>
            <person name="Maurer P."/>
        </authorList>
    </citation>
    <scope>NUCLEOTIDE SEQUENCE [GENOMIC DNA]</scope>
    <source>
        <strain>BB147</strain>
    </source>
</reference>
<gene>
    <name type="primary">NIA</name>
</gene>
<evidence type="ECO:0000250" key="1"/>
<evidence type="ECO:0000250" key="2">
    <source>
        <dbReference type="UniProtKB" id="A0A286R227"/>
    </source>
</evidence>
<evidence type="ECO:0000250" key="3">
    <source>
        <dbReference type="UniProtKB" id="P17571"/>
    </source>
</evidence>
<evidence type="ECO:0000250" key="4">
    <source>
        <dbReference type="UniProtKB" id="P49050"/>
    </source>
</evidence>
<evidence type="ECO:0000255" key="5"/>
<evidence type="ECO:0000255" key="6">
    <source>
        <dbReference type="PROSITE-ProRule" id="PRU00279"/>
    </source>
</evidence>
<evidence type="ECO:0000255" key="7">
    <source>
        <dbReference type="PROSITE-ProRule" id="PRU00716"/>
    </source>
</evidence>
<evidence type="ECO:0000256" key="8">
    <source>
        <dbReference type="SAM" id="MobiDB-lite"/>
    </source>
</evidence>
<evidence type="ECO:0000305" key="9"/>
<keyword id="KW-1015">Disulfide bond</keyword>
<keyword id="KW-0274">FAD</keyword>
<keyword id="KW-0285">Flavoprotein</keyword>
<keyword id="KW-0349">Heme</keyword>
<keyword id="KW-0408">Iron</keyword>
<keyword id="KW-0479">Metal-binding</keyword>
<keyword id="KW-0500">Molybdenum</keyword>
<keyword id="KW-0521">NADP</keyword>
<keyword id="KW-0534">Nitrate assimilation</keyword>
<keyword id="KW-0560">Oxidoreductase</keyword>
<organism>
    <name type="scientific">Beauveria bassiana</name>
    <name type="common">White muscardine disease fungus</name>
    <name type="synonym">Tritirachium shiotae</name>
    <dbReference type="NCBI Taxonomy" id="176275"/>
    <lineage>
        <taxon>Eukaryota</taxon>
        <taxon>Fungi</taxon>
        <taxon>Dikarya</taxon>
        <taxon>Ascomycota</taxon>
        <taxon>Pezizomycotina</taxon>
        <taxon>Sordariomycetes</taxon>
        <taxon>Hypocreomycetidae</taxon>
        <taxon>Hypocreales</taxon>
        <taxon>Cordycipitaceae</taxon>
        <taxon>Beauveria</taxon>
    </lineage>
</organism>
<dbReference type="EC" id="1.7.1.3"/>
<dbReference type="EMBL" id="X84950">
    <property type="protein sequence ID" value="CAA59336.1"/>
    <property type="molecule type" value="Genomic_DNA"/>
</dbReference>
<dbReference type="PIR" id="S52857">
    <property type="entry name" value="S52857"/>
</dbReference>
<dbReference type="SMR" id="P43100"/>
<dbReference type="GO" id="GO:0071949">
    <property type="term" value="F:FAD binding"/>
    <property type="evidence" value="ECO:0000250"/>
    <property type="project" value="UniProtKB"/>
</dbReference>
<dbReference type="GO" id="GO:0020037">
    <property type="term" value="F:heme binding"/>
    <property type="evidence" value="ECO:0007669"/>
    <property type="project" value="InterPro"/>
</dbReference>
<dbReference type="GO" id="GO:0030151">
    <property type="term" value="F:molybdenum ion binding"/>
    <property type="evidence" value="ECO:0000250"/>
    <property type="project" value="UniProtKB"/>
</dbReference>
<dbReference type="GO" id="GO:0043546">
    <property type="term" value="F:molybdopterin cofactor binding"/>
    <property type="evidence" value="ECO:0007669"/>
    <property type="project" value="InterPro"/>
</dbReference>
<dbReference type="GO" id="GO:0050464">
    <property type="term" value="F:nitrate reductase (NADPH) activity"/>
    <property type="evidence" value="ECO:0007669"/>
    <property type="project" value="UniProtKB-EC"/>
</dbReference>
<dbReference type="GO" id="GO:0008482">
    <property type="term" value="F:sulfite oxidase activity"/>
    <property type="evidence" value="ECO:0007669"/>
    <property type="project" value="TreeGrafter"/>
</dbReference>
<dbReference type="GO" id="GO:0042128">
    <property type="term" value="P:nitrate assimilation"/>
    <property type="evidence" value="ECO:0007669"/>
    <property type="project" value="UniProtKB-KW"/>
</dbReference>
<dbReference type="GO" id="GO:0006809">
    <property type="term" value="P:nitric oxide biosynthetic process"/>
    <property type="evidence" value="ECO:0007669"/>
    <property type="project" value="InterPro"/>
</dbReference>
<dbReference type="GO" id="GO:0006790">
    <property type="term" value="P:sulfur compound metabolic process"/>
    <property type="evidence" value="ECO:0007669"/>
    <property type="project" value="TreeGrafter"/>
</dbReference>
<dbReference type="CDD" id="cd06183">
    <property type="entry name" value="cyt_b5_reduct_like"/>
    <property type="match status" value="1"/>
</dbReference>
<dbReference type="FunFam" id="2.60.40.650:FF:000001">
    <property type="entry name" value="Nitrate reductase"/>
    <property type="match status" value="1"/>
</dbReference>
<dbReference type="FunFam" id="3.10.120.10:FF:000016">
    <property type="entry name" value="Nitrate reductase"/>
    <property type="match status" value="1"/>
</dbReference>
<dbReference type="FunFam" id="3.90.420.10:FF:000005">
    <property type="entry name" value="Nitrate reductase"/>
    <property type="match status" value="1"/>
</dbReference>
<dbReference type="Gene3D" id="2.60.40.650">
    <property type="match status" value="1"/>
</dbReference>
<dbReference type="Gene3D" id="3.10.120.10">
    <property type="entry name" value="Cytochrome b5-like heme/steroid binding domain"/>
    <property type="match status" value="1"/>
</dbReference>
<dbReference type="Gene3D" id="3.40.50.80">
    <property type="entry name" value="Nucleotide-binding domain of ferredoxin-NADP reductase (FNR) module"/>
    <property type="match status" value="1"/>
</dbReference>
<dbReference type="Gene3D" id="3.90.420.10">
    <property type="entry name" value="Oxidoreductase, molybdopterin-binding domain"/>
    <property type="match status" value="1"/>
</dbReference>
<dbReference type="Gene3D" id="2.40.30.10">
    <property type="entry name" value="Translation factors"/>
    <property type="match status" value="1"/>
</dbReference>
<dbReference type="InterPro" id="IPR008333">
    <property type="entry name" value="Cbr1-like_FAD-bd_dom"/>
</dbReference>
<dbReference type="InterPro" id="IPR001199">
    <property type="entry name" value="Cyt_B5-like_heme/steroid-bd"/>
</dbReference>
<dbReference type="InterPro" id="IPR036400">
    <property type="entry name" value="Cyt_B5-like_heme/steroid_sf"/>
</dbReference>
<dbReference type="InterPro" id="IPR018506">
    <property type="entry name" value="Cyt_B5_heme-BS"/>
</dbReference>
<dbReference type="InterPro" id="IPR017927">
    <property type="entry name" value="FAD-bd_FR_type"/>
</dbReference>
<dbReference type="InterPro" id="IPR001709">
    <property type="entry name" value="Flavoprot_Pyr_Nucl_cyt_Rdtase"/>
</dbReference>
<dbReference type="InterPro" id="IPR039261">
    <property type="entry name" value="FNR_nucleotide-bd"/>
</dbReference>
<dbReference type="InterPro" id="IPR014756">
    <property type="entry name" value="Ig_E-set"/>
</dbReference>
<dbReference type="InterPro" id="IPR005066">
    <property type="entry name" value="MoCF_OxRdtse_dimer"/>
</dbReference>
<dbReference type="InterPro" id="IPR008335">
    <property type="entry name" value="Mopterin_OxRdtase_euk"/>
</dbReference>
<dbReference type="InterPro" id="IPR012137">
    <property type="entry name" value="Nitr_rd_NADH"/>
</dbReference>
<dbReference type="InterPro" id="IPR001433">
    <property type="entry name" value="OxRdtase_FAD/NAD-bd"/>
</dbReference>
<dbReference type="InterPro" id="IPR000572">
    <property type="entry name" value="OxRdtase_Mopterin-bd_dom"/>
</dbReference>
<dbReference type="InterPro" id="IPR036374">
    <property type="entry name" value="OxRdtase_Mopterin-bd_sf"/>
</dbReference>
<dbReference type="InterPro" id="IPR022407">
    <property type="entry name" value="OxRdtase_Mopterin_BS"/>
</dbReference>
<dbReference type="InterPro" id="IPR017938">
    <property type="entry name" value="Riboflavin_synthase-like_b-brl"/>
</dbReference>
<dbReference type="PANTHER" id="PTHR19372:SF7">
    <property type="entry name" value="SULFITE OXIDASE, MITOCHONDRIAL"/>
    <property type="match status" value="1"/>
</dbReference>
<dbReference type="PANTHER" id="PTHR19372">
    <property type="entry name" value="SULFITE REDUCTASE"/>
    <property type="match status" value="1"/>
</dbReference>
<dbReference type="Pfam" id="PF00173">
    <property type="entry name" value="Cyt-b5"/>
    <property type="match status" value="1"/>
</dbReference>
<dbReference type="Pfam" id="PF00970">
    <property type="entry name" value="FAD_binding_6"/>
    <property type="match status" value="1"/>
</dbReference>
<dbReference type="Pfam" id="PF03404">
    <property type="entry name" value="Mo-co_dimer"/>
    <property type="match status" value="1"/>
</dbReference>
<dbReference type="Pfam" id="PF00175">
    <property type="entry name" value="NAD_binding_1"/>
    <property type="match status" value="1"/>
</dbReference>
<dbReference type="Pfam" id="PF00174">
    <property type="entry name" value="Oxidored_molyb"/>
    <property type="match status" value="1"/>
</dbReference>
<dbReference type="PIRSF" id="PIRSF000233">
    <property type="entry name" value="Nitr_rd_NADH"/>
    <property type="match status" value="1"/>
</dbReference>
<dbReference type="PRINTS" id="PR00406">
    <property type="entry name" value="CYTB5RDTASE"/>
</dbReference>
<dbReference type="PRINTS" id="PR00363">
    <property type="entry name" value="CYTOCHROMEB5"/>
</dbReference>
<dbReference type="PRINTS" id="PR00407">
    <property type="entry name" value="EUMOPTERIN"/>
</dbReference>
<dbReference type="PRINTS" id="PR00371">
    <property type="entry name" value="FPNCR"/>
</dbReference>
<dbReference type="SMART" id="SM01117">
    <property type="entry name" value="Cyt-b5"/>
    <property type="match status" value="1"/>
</dbReference>
<dbReference type="SUPFAM" id="SSF55856">
    <property type="entry name" value="Cytochrome b5-like heme/steroid binding domain"/>
    <property type="match status" value="1"/>
</dbReference>
<dbReference type="SUPFAM" id="SSF81296">
    <property type="entry name" value="E set domains"/>
    <property type="match status" value="1"/>
</dbReference>
<dbReference type="SUPFAM" id="SSF52343">
    <property type="entry name" value="Ferredoxin reductase-like, C-terminal NADP-linked domain"/>
    <property type="match status" value="1"/>
</dbReference>
<dbReference type="SUPFAM" id="SSF56524">
    <property type="entry name" value="Oxidoreductase molybdopterin-binding domain"/>
    <property type="match status" value="1"/>
</dbReference>
<dbReference type="SUPFAM" id="SSF63380">
    <property type="entry name" value="Riboflavin synthase domain-like"/>
    <property type="match status" value="1"/>
</dbReference>
<dbReference type="PROSITE" id="PS00191">
    <property type="entry name" value="CYTOCHROME_B5_1"/>
    <property type="match status" value="1"/>
</dbReference>
<dbReference type="PROSITE" id="PS50255">
    <property type="entry name" value="CYTOCHROME_B5_2"/>
    <property type="match status" value="1"/>
</dbReference>
<dbReference type="PROSITE" id="PS51384">
    <property type="entry name" value="FAD_FR"/>
    <property type="match status" value="1"/>
</dbReference>
<dbReference type="PROSITE" id="PS00559">
    <property type="entry name" value="MOLYBDOPTERIN_EUK"/>
    <property type="match status" value="1"/>
</dbReference>
<feature type="chain" id="PRO_0000166041" description="Nitrate reductase [NADPH]">
    <location>
        <begin position="1"/>
        <end position="894"/>
    </location>
</feature>
<feature type="domain" description="Cytochrome b5 heme-binding" evidence="6">
    <location>
        <begin position="535"/>
        <end position="610"/>
    </location>
</feature>
<feature type="domain" description="FAD-binding FR-type" evidence="7">
    <location>
        <begin position="638"/>
        <end position="749"/>
    </location>
</feature>
<feature type="region of interest" description="Disordered" evidence="8">
    <location>
        <begin position="1"/>
        <end position="79"/>
    </location>
</feature>
<feature type="compositionally biased region" description="Polar residues" evidence="8">
    <location>
        <begin position="7"/>
        <end position="16"/>
    </location>
</feature>
<feature type="compositionally biased region" description="Basic and acidic residues" evidence="8">
    <location>
        <begin position="69"/>
        <end position="79"/>
    </location>
</feature>
<feature type="binding site" evidence="4">
    <location>
        <position position="169"/>
    </location>
    <ligand>
        <name>Mo-molybdopterin</name>
        <dbReference type="ChEBI" id="CHEBI:71302"/>
    </ligand>
    <ligandPart>
        <name>Mo</name>
        <dbReference type="ChEBI" id="CHEBI:28685"/>
    </ligandPart>
</feature>
<feature type="binding site" description="axial binding residue" evidence="6">
    <location>
        <position position="570"/>
    </location>
    <ligand>
        <name>heme</name>
        <dbReference type="ChEBI" id="CHEBI:30413"/>
    </ligand>
    <ligandPart>
        <name>Fe</name>
        <dbReference type="ChEBI" id="CHEBI:18248"/>
    </ligandPart>
</feature>
<feature type="binding site" description="axial binding residue" evidence="6">
    <location>
        <position position="593"/>
    </location>
    <ligand>
        <name>heme</name>
        <dbReference type="ChEBI" id="CHEBI:30413"/>
    </ligand>
    <ligandPart>
        <name>Fe</name>
        <dbReference type="ChEBI" id="CHEBI:18248"/>
    </ligandPart>
</feature>
<feature type="binding site" evidence="2">
    <location>
        <begin position="692"/>
        <end position="695"/>
    </location>
    <ligand>
        <name>FAD</name>
        <dbReference type="ChEBI" id="CHEBI:57692"/>
    </ligand>
</feature>
<feature type="binding site" evidence="2">
    <location>
        <begin position="709"/>
        <end position="713"/>
    </location>
    <ligand>
        <name>FAD</name>
        <dbReference type="ChEBI" id="CHEBI:57692"/>
    </ligand>
</feature>
<feature type="binding site" evidence="2">
    <location>
        <begin position="723"/>
        <end position="725"/>
    </location>
    <ligand>
        <name>FAD</name>
        <dbReference type="ChEBI" id="CHEBI:57692"/>
    </ligand>
</feature>
<feature type="binding site" evidence="3">
    <location>
        <position position="773"/>
    </location>
    <ligand>
        <name>FAD</name>
        <dbReference type="ChEBI" id="CHEBI:57692"/>
    </ligand>
</feature>
<feature type="binding site" evidence="2">
    <location>
        <position position="776"/>
    </location>
    <ligand>
        <name>FAD</name>
        <dbReference type="ChEBI" id="CHEBI:57692"/>
    </ligand>
</feature>
<feature type="disulfide bond" description="Interchain" evidence="5">
    <location>
        <position position="418"/>
    </location>
</feature>